<organism>
    <name type="scientific">Deinagkistrodon acutus</name>
    <name type="common">Hundred-pace snake</name>
    <name type="synonym">Agkistrodon acutus</name>
    <dbReference type="NCBI Taxonomy" id="36307"/>
    <lineage>
        <taxon>Eukaryota</taxon>
        <taxon>Metazoa</taxon>
        <taxon>Chordata</taxon>
        <taxon>Craniata</taxon>
        <taxon>Vertebrata</taxon>
        <taxon>Euteleostomi</taxon>
        <taxon>Lepidosauria</taxon>
        <taxon>Squamata</taxon>
        <taxon>Bifurcata</taxon>
        <taxon>Unidentata</taxon>
        <taxon>Episquamata</taxon>
        <taxon>Toxicofera</taxon>
        <taxon>Serpentes</taxon>
        <taxon>Colubroidea</taxon>
        <taxon>Viperidae</taxon>
        <taxon>Crotalinae</taxon>
        <taxon>Deinagkistrodon</taxon>
    </lineage>
</organism>
<accession>Q9DEF9</accession>
<dbReference type="EMBL" id="AB036880">
    <property type="protein sequence ID" value="BAA99281.1"/>
    <property type="molecule type" value="mRNA"/>
</dbReference>
<dbReference type="PIR" id="JC7134">
    <property type="entry name" value="JC7134"/>
</dbReference>
<dbReference type="PDB" id="1Y17">
    <property type="method" value="X-ray"/>
    <property type="resolution" value="2.40 A"/>
    <property type="chains" value="A=24-152"/>
</dbReference>
<dbReference type="PDBsum" id="1Y17"/>
<dbReference type="SMR" id="Q9DEF9"/>
<dbReference type="EvolutionaryTrace" id="Q9DEF9"/>
<dbReference type="GO" id="GO:0005576">
    <property type="term" value="C:extracellular region"/>
    <property type="evidence" value="ECO:0007669"/>
    <property type="project" value="UniProtKB-SubCell"/>
</dbReference>
<dbReference type="GO" id="GO:0046872">
    <property type="term" value="F:metal ion binding"/>
    <property type="evidence" value="ECO:0007669"/>
    <property type="project" value="UniProtKB-KW"/>
</dbReference>
<dbReference type="GO" id="GO:0090729">
    <property type="term" value="F:toxin activity"/>
    <property type="evidence" value="ECO:0007669"/>
    <property type="project" value="UniProtKB-KW"/>
</dbReference>
<dbReference type="FunFam" id="3.10.100.10:FF:000087">
    <property type="entry name" value="Snaclec rhodocetin subunit delta"/>
    <property type="match status" value="1"/>
</dbReference>
<dbReference type="Gene3D" id="3.10.100.10">
    <property type="entry name" value="Mannose-Binding Protein A, subunit A"/>
    <property type="match status" value="1"/>
</dbReference>
<dbReference type="InterPro" id="IPR001304">
    <property type="entry name" value="C-type_lectin-like"/>
</dbReference>
<dbReference type="InterPro" id="IPR016186">
    <property type="entry name" value="C-type_lectin-like/link_sf"/>
</dbReference>
<dbReference type="InterPro" id="IPR050111">
    <property type="entry name" value="C-type_lectin/snaclec_domain"/>
</dbReference>
<dbReference type="InterPro" id="IPR018378">
    <property type="entry name" value="C-type_lectin_CS"/>
</dbReference>
<dbReference type="InterPro" id="IPR016187">
    <property type="entry name" value="CTDL_fold"/>
</dbReference>
<dbReference type="PANTHER" id="PTHR22803">
    <property type="entry name" value="MANNOSE, PHOSPHOLIPASE, LECTIN RECEPTOR RELATED"/>
    <property type="match status" value="1"/>
</dbReference>
<dbReference type="Pfam" id="PF00059">
    <property type="entry name" value="Lectin_C"/>
    <property type="match status" value="1"/>
</dbReference>
<dbReference type="PRINTS" id="PR01504">
    <property type="entry name" value="PNCREATITSAP"/>
</dbReference>
<dbReference type="SMART" id="SM00034">
    <property type="entry name" value="CLECT"/>
    <property type="match status" value="1"/>
</dbReference>
<dbReference type="SUPFAM" id="SSF56436">
    <property type="entry name" value="C-type lectin-like"/>
    <property type="match status" value="1"/>
</dbReference>
<dbReference type="PROSITE" id="PS00615">
    <property type="entry name" value="C_TYPE_LECTIN_1"/>
    <property type="match status" value="1"/>
</dbReference>
<dbReference type="PROSITE" id="PS50041">
    <property type="entry name" value="C_TYPE_LECTIN_2"/>
    <property type="match status" value="1"/>
</dbReference>
<comment type="function">
    <text evidence="1 3">Anticoagulant protein which binds to the gamma-carboxyglutamic acid-domain regions of factors IX and factor X in the presence of calcium with a 1 to 1 stoichiometry. Also inhibits platelet aggregation by binding to platelet glycoprotein Ibalpha (GP1BA) and functioning as a blocker of vWF. Is devoid of hemorrhagic and lethal activities. Possesses antithrombotic and thrombolytic activities. Also hydrolyzes the Aalpha-chain of fibrinogen. Does not affect the Bbeta-chain and the gamma chain (By similarity).</text>
</comment>
<comment type="subunit">
    <text evidence="4">Heterodimer of subunits A and B; disulfide-linked.</text>
</comment>
<comment type="subcellular location">
    <subcellularLocation>
        <location>Secreted</location>
    </subcellularLocation>
</comment>
<comment type="tissue specificity">
    <text>Expressed by the venom gland.</text>
</comment>
<comment type="similarity">
    <text evidence="5">Belongs to the snaclec family.</text>
</comment>
<evidence type="ECO:0000250" key="1"/>
<evidence type="ECO:0000255" key="2">
    <source>
        <dbReference type="PROSITE-ProRule" id="PRU00040"/>
    </source>
</evidence>
<evidence type="ECO:0000269" key="3">
    <source>
    </source>
</evidence>
<evidence type="ECO:0000269" key="4">
    <source ref="2"/>
</evidence>
<evidence type="ECO:0000305" key="5"/>
<evidence type="ECO:0007829" key="6">
    <source>
        <dbReference type="PDB" id="1Y17"/>
    </source>
</evidence>
<sequence>MGRFIFVSFGLLVVYLSLSGTAADCSSSWSSYEGHCYKAFKQSKTWADAESFCTKQVNGGHLVSIESSGEADFVAHLIAQKIKSAKIHVWIGLRAQNKEKQCSIEWSDGSSISYENWIEEESKKCLGVHKATGFRKWENFYCEQRDPFVCEA</sequence>
<name>SLAA_DEIAC</name>
<proteinExistence type="evidence at protein level"/>
<feature type="signal peptide" evidence="1">
    <location>
        <begin position="1"/>
        <end position="23"/>
    </location>
</feature>
<feature type="chain" id="PRO_5000049504" description="Snaclec anticoagulant protein subunit A">
    <location>
        <begin position="24"/>
        <end position="152"/>
    </location>
</feature>
<feature type="domain" description="C-type lectin" evidence="2">
    <location>
        <begin position="24"/>
        <end position="152"/>
    </location>
</feature>
<feature type="binding site">
    <location>
        <position position="64"/>
    </location>
    <ligand>
        <name>Ca(2+)</name>
        <dbReference type="ChEBI" id="CHEBI:29108"/>
    </ligand>
</feature>
<feature type="binding site">
    <location>
        <position position="66"/>
    </location>
    <ligand>
        <name>Ca(2+)</name>
        <dbReference type="ChEBI" id="CHEBI:29108"/>
    </ligand>
</feature>
<feature type="binding site">
    <location>
        <position position="70"/>
    </location>
    <ligand>
        <name>Ca(2+)</name>
        <dbReference type="ChEBI" id="CHEBI:29108"/>
    </ligand>
</feature>
<feature type="binding site">
    <location>
        <position position="151"/>
    </location>
    <ligand>
        <name>Ca(2+)</name>
        <dbReference type="ChEBI" id="CHEBI:29108"/>
    </ligand>
</feature>
<feature type="disulfide bond" evidence="2 4">
    <location>
        <begin position="25"/>
        <end position="36"/>
    </location>
</feature>
<feature type="disulfide bond" evidence="2 4">
    <location>
        <begin position="53"/>
        <end position="150"/>
    </location>
</feature>
<feature type="disulfide bond" description="Interchain (with C-98 in subunit B)" evidence="2 4">
    <location>
        <position position="102"/>
    </location>
</feature>
<feature type="disulfide bond" evidence="2 4">
    <location>
        <begin position="125"/>
        <end position="142"/>
    </location>
</feature>
<feature type="strand" evidence="6">
    <location>
        <begin position="30"/>
        <end position="32"/>
    </location>
</feature>
<feature type="strand" evidence="6">
    <location>
        <begin position="35"/>
        <end position="44"/>
    </location>
</feature>
<feature type="helix" evidence="6">
    <location>
        <begin position="46"/>
        <end position="56"/>
    </location>
</feature>
<feature type="helix" evidence="6">
    <location>
        <begin position="68"/>
        <end position="81"/>
    </location>
</feature>
<feature type="strand" evidence="6">
    <location>
        <begin position="85"/>
        <end position="87"/>
    </location>
</feature>
<feature type="strand" evidence="6">
    <location>
        <begin position="89"/>
        <end position="95"/>
    </location>
</feature>
<feature type="helix" evidence="6">
    <location>
        <begin position="119"/>
        <end position="121"/>
    </location>
</feature>
<feature type="strand" evidence="6">
    <location>
        <begin position="125"/>
        <end position="128"/>
    </location>
</feature>
<feature type="helix" evidence="6">
    <location>
        <begin position="130"/>
        <end position="132"/>
    </location>
</feature>
<feature type="strand" evidence="6">
    <location>
        <begin position="136"/>
        <end position="140"/>
    </location>
</feature>
<feature type="strand" evidence="6">
    <location>
        <begin position="146"/>
        <end position="152"/>
    </location>
</feature>
<reference key="1">
    <citation type="journal article" date="2002" name="Toxicon">
        <title>Characterization, primary structure and molecular evolution of anticoagulant protein from Agkistrodon actus venom.</title>
        <authorList>
            <person name="Tani A."/>
            <person name="Ogawa T."/>
            <person name="Nose T."/>
            <person name="Nikandrov N.N."/>
            <person name="Deshimaru M."/>
            <person name="Chijiwa T."/>
            <person name="Chang C.C."/>
            <person name="Fukumaki Y."/>
            <person name="Ohno M."/>
        </authorList>
    </citation>
    <scope>NUCLEOTIDE SEQUENCE [MRNA]</scope>
    <scope>FUNCTION</scope>
    <source>
        <tissue>Venom</tissue>
        <tissue>Venom gland</tissue>
    </source>
</reference>
<reference key="2">
    <citation type="submission" date="2004-11" db="PDB data bank">
        <title>Characterizations and crystal structures of two snake venom proteins with the activity of binding coagulation factor X from Agkistrodon acutus.</title>
        <authorList>
            <person name="Zhu Z."/>
            <person name="Liu S."/>
            <person name="Mo X."/>
            <person name="Yu X."/>
            <person name="Liang Z."/>
            <person name="Zang J."/>
            <person name="Zhao W."/>
            <person name="Teng M."/>
            <person name="Niu L."/>
        </authorList>
    </citation>
    <scope>X-RAY CRYSTALLOGRAPHY (2.40 ANGSTROMS) OF 24-152</scope>
    <scope>METAL-BINDING SITES</scope>
    <scope>DISULFIDE BONDS</scope>
    <source>
        <tissue>Venom</tissue>
    </source>
</reference>
<protein>
    <recommendedName>
        <fullName>Snaclec anticoagulant protein subunit A</fullName>
        <shortName>AaACP-A</shortName>
    </recommendedName>
</protein>
<keyword id="KW-0002">3D-structure</keyword>
<keyword id="KW-1203">Blood coagulation cascade inhibiting toxin</keyword>
<keyword id="KW-0106">Calcium</keyword>
<keyword id="KW-1015">Disulfide bond</keyword>
<keyword id="KW-1199">Hemostasis impairing toxin</keyword>
<keyword id="KW-0479">Metal-binding</keyword>
<keyword id="KW-1201">Platelet aggregation inhibiting toxin</keyword>
<keyword id="KW-0964">Secreted</keyword>
<keyword id="KW-0732">Signal</keyword>
<keyword id="KW-0800">Toxin</keyword>